<dbReference type="EMBL" id="M10919">
    <property type="status" value="NOT_ANNOTATED_CDS"/>
    <property type="molecule type" value="Genomic_DNA"/>
</dbReference>
<dbReference type="PIR" id="A24033">
    <property type="entry name" value="A24033"/>
</dbReference>
<dbReference type="RefSeq" id="WP_013058446.1">
    <property type="nucleotide sequence ID" value="NZ_VYTX01000003.1"/>
</dbReference>
<dbReference type="SMR" id="P10570"/>
<dbReference type="GO" id="GO:0003690">
    <property type="term" value="F:double-stranded DNA binding"/>
    <property type="evidence" value="ECO:0007669"/>
    <property type="project" value="InterPro"/>
</dbReference>
<dbReference type="GO" id="GO:0006265">
    <property type="term" value="P:DNA topological change"/>
    <property type="evidence" value="ECO:0007669"/>
    <property type="project" value="InterPro"/>
</dbReference>
<dbReference type="GO" id="GO:0030435">
    <property type="term" value="P:sporulation resulting in formation of a cellular spore"/>
    <property type="evidence" value="ECO:0007669"/>
    <property type="project" value="UniProtKB-KW"/>
</dbReference>
<dbReference type="Gene3D" id="6.10.10.80">
    <property type="entry name" value="Small, acid-soluble spore protein, alpha/beta type-like"/>
    <property type="match status" value="1"/>
</dbReference>
<dbReference type="InterPro" id="IPR001448">
    <property type="entry name" value="SASP_alpha/beta-type"/>
</dbReference>
<dbReference type="InterPro" id="IPR018126">
    <property type="entry name" value="SASP_alpha/beta-type_CS"/>
</dbReference>
<dbReference type="InterPro" id="IPR050847">
    <property type="entry name" value="SASP_DNA-binding"/>
</dbReference>
<dbReference type="InterPro" id="IPR038300">
    <property type="entry name" value="SASP_sf_alpha/beta"/>
</dbReference>
<dbReference type="PANTHER" id="PTHR36107">
    <property type="entry name" value="SMALL, ACID-SOLUBLE SPORE PROTEIN A"/>
    <property type="match status" value="1"/>
</dbReference>
<dbReference type="PANTHER" id="PTHR36107:SF1">
    <property type="entry name" value="SMALL, ACID-SOLUBLE SPORE PROTEIN A"/>
    <property type="match status" value="1"/>
</dbReference>
<dbReference type="Pfam" id="PF00269">
    <property type="entry name" value="SASP"/>
    <property type="match status" value="1"/>
</dbReference>
<dbReference type="PROSITE" id="PS00304">
    <property type="entry name" value="SASP_1"/>
    <property type="match status" value="1"/>
</dbReference>
<dbReference type="PROSITE" id="PS00684">
    <property type="entry name" value="SASP_2"/>
    <property type="match status" value="1"/>
</dbReference>
<sequence>MANNNSSNNNELLVYGAEQAIDQMKYEIASEFGVNLGADTTARANGSVGGEITKRLVQLAEQQLGGGRF</sequence>
<keyword id="KW-0238">DNA-binding</keyword>
<keyword id="KW-0749">Sporulation</keyword>
<protein>
    <recommendedName>
        <fullName>Small, acid-soluble spore protein C1</fullName>
        <shortName>SASP</shortName>
    </recommendedName>
</protein>
<evidence type="ECO:0000305" key="1"/>
<name>SAS1_PRIMG</name>
<gene>
    <name type="primary">SASP-C1</name>
</gene>
<reference key="1">
    <citation type="journal article" date="1985" name="Gene">
        <title>Genes for Bacillus megaterium small, acid-soluble spore proteins: nucleotide sequence of two genes and their expression during sporulation.</title>
        <authorList>
            <person name="Fliss E.R."/>
            <person name="Setlow P."/>
        </authorList>
    </citation>
    <scope>NUCLEOTIDE SEQUENCE [GENOMIC DNA]</scope>
</reference>
<organism>
    <name type="scientific">Priestia megaterium</name>
    <name type="common">Bacillus megaterium</name>
    <dbReference type="NCBI Taxonomy" id="1404"/>
    <lineage>
        <taxon>Bacteria</taxon>
        <taxon>Bacillati</taxon>
        <taxon>Bacillota</taxon>
        <taxon>Bacilli</taxon>
        <taxon>Bacillales</taxon>
        <taxon>Bacillaceae</taxon>
        <taxon>Priestia</taxon>
    </lineage>
</organism>
<proteinExistence type="inferred from homology"/>
<accession>P10570</accession>
<feature type="chain" id="PRO_0000196294" description="Small, acid-soluble spore protein C1">
    <location>
        <begin position="1"/>
        <end position="69"/>
    </location>
</feature>
<feature type="site" description="Cleavage; by spore protease">
    <location>
        <begin position="27"/>
        <end position="28"/>
    </location>
</feature>
<comment type="function">
    <text>SASP are bound to spore DNA. They are double-stranded DNA-binding proteins that cause DNA to change to an a-like conformation. They protect the DNA backbone from chemical and enzymatic cleavage and are thus involved in dormant spore's high resistance to UV light.</text>
</comment>
<comment type="miscellaneous">
    <text>SASP are degraded in the first minutes of spore germination and provide amino acids for both new protein synthesis and metabolism.</text>
</comment>
<comment type="similarity">
    <text evidence="1">Belongs to the alpha/beta-type SASP family.</text>
</comment>